<gene>
    <name type="primary">Psme2</name>
    <name type="synonym">Pa28b1</name>
</gene>
<protein>
    <recommendedName>
        <fullName>Proteasome activator complex subunit 2</fullName>
    </recommendedName>
    <alternativeName>
        <fullName>11S regulator complex subunit beta</fullName>
        <shortName>REG-beta</shortName>
    </alternativeName>
    <alternativeName>
        <fullName>Activator of multicatalytic protease subunit 2</fullName>
    </alternativeName>
    <alternativeName>
        <fullName>Proteasome activator 28 subunit beta</fullName>
        <shortName>PA28b</shortName>
        <shortName>PA28beta</shortName>
    </alternativeName>
</protein>
<reference key="1">
    <citation type="journal article" date="1997" name="Immunogenetics">
        <title>Sequence and expression of mouse proteasome activator PA28 and the related autoantigen Ki.</title>
        <authorList>
            <person name="Jiang H."/>
            <person name="Monaco J.J."/>
        </authorList>
    </citation>
    <scope>NUCLEOTIDE SEQUENCE [MRNA]</scope>
    <source>
        <strain>B10.BR</strain>
    </source>
</reference>
<reference key="2">
    <citation type="journal article" date="1998" name="J. Immunol.">
        <title>Characterization of the mouse PA28 activator complex gene family: complete organizations of the three member genes and a physical map of the approximately 150-kb region containing the alpha- and beta-subunit genes.</title>
        <authorList>
            <person name="Kohda K."/>
            <person name="Ishibashi T."/>
            <person name="Shimbara N."/>
            <person name="Tanaka K."/>
            <person name="Matsuda Y."/>
            <person name="Kasahara M."/>
        </authorList>
    </citation>
    <scope>NUCLEOTIDE SEQUENCE [GENOMIC DNA]</scope>
    <source>
        <strain>129/SvJ</strain>
    </source>
</reference>
<reference key="3">
    <citation type="journal article" date="1999" name="Immunogenetics">
        <title>Characterization of the mouse proteasome regulator PA28b gene.</title>
        <authorList>
            <person name="Li Y."/>
            <person name="Chambers J."/>
            <person name="Pang J."/>
            <person name="Ngo K."/>
            <person name="Peterson P.A."/>
            <person name="Leung W.P."/>
            <person name="Yang Y."/>
        </authorList>
    </citation>
    <scope>NUCLEOTIDE SEQUENCE [GENOMIC DNA]</scope>
    <source>
        <strain>129</strain>
    </source>
</reference>
<reference key="4">
    <citation type="journal article" date="2001" name="Immunogenetics">
        <title>Nucleotide sequence analysis of the ~35-kb segment containing interferon-gamma-inducible mouse proteasome activator genes.</title>
        <authorList>
            <person name="Yawata M."/>
            <person name="Murata S."/>
            <person name="Tanaka K."/>
            <person name="Ishigatsubo Y."/>
            <person name="Kasahara M."/>
        </authorList>
    </citation>
    <scope>NUCLEOTIDE SEQUENCE [GENOMIC DNA]</scope>
    <source>
        <strain>129/SvJ</strain>
    </source>
</reference>
<reference key="5">
    <citation type="journal article" date="2005" name="Science">
        <title>The transcriptional landscape of the mammalian genome.</title>
        <authorList>
            <person name="Carninci P."/>
            <person name="Kasukawa T."/>
            <person name="Katayama S."/>
            <person name="Gough J."/>
            <person name="Frith M.C."/>
            <person name="Maeda N."/>
            <person name="Oyama R."/>
            <person name="Ravasi T."/>
            <person name="Lenhard B."/>
            <person name="Wells C."/>
            <person name="Kodzius R."/>
            <person name="Shimokawa K."/>
            <person name="Bajic V.B."/>
            <person name="Brenner S.E."/>
            <person name="Batalov S."/>
            <person name="Forrest A.R."/>
            <person name="Zavolan M."/>
            <person name="Davis M.J."/>
            <person name="Wilming L.G."/>
            <person name="Aidinis V."/>
            <person name="Allen J.E."/>
            <person name="Ambesi-Impiombato A."/>
            <person name="Apweiler R."/>
            <person name="Aturaliya R.N."/>
            <person name="Bailey T.L."/>
            <person name="Bansal M."/>
            <person name="Baxter L."/>
            <person name="Beisel K.W."/>
            <person name="Bersano T."/>
            <person name="Bono H."/>
            <person name="Chalk A.M."/>
            <person name="Chiu K.P."/>
            <person name="Choudhary V."/>
            <person name="Christoffels A."/>
            <person name="Clutterbuck D.R."/>
            <person name="Crowe M.L."/>
            <person name="Dalla E."/>
            <person name="Dalrymple B.P."/>
            <person name="de Bono B."/>
            <person name="Della Gatta G."/>
            <person name="di Bernardo D."/>
            <person name="Down T."/>
            <person name="Engstrom P."/>
            <person name="Fagiolini M."/>
            <person name="Faulkner G."/>
            <person name="Fletcher C.F."/>
            <person name="Fukushima T."/>
            <person name="Furuno M."/>
            <person name="Futaki S."/>
            <person name="Gariboldi M."/>
            <person name="Georgii-Hemming P."/>
            <person name="Gingeras T.R."/>
            <person name="Gojobori T."/>
            <person name="Green R.E."/>
            <person name="Gustincich S."/>
            <person name="Harbers M."/>
            <person name="Hayashi Y."/>
            <person name="Hensch T.K."/>
            <person name="Hirokawa N."/>
            <person name="Hill D."/>
            <person name="Huminiecki L."/>
            <person name="Iacono M."/>
            <person name="Ikeo K."/>
            <person name="Iwama A."/>
            <person name="Ishikawa T."/>
            <person name="Jakt M."/>
            <person name="Kanapin A."/>
            <person name="Katoh M."/>
            <person name="Kawasawa Y."/>
            <person name="Kelso J."/>
            <person name="Kitamura H."/>
            <person name="Kitano H."/>
            <person name="Kollias G."/>
            <person name="Krishnan S.P."/>
            <person name="Kruger A."/>
            <person name="Kummerfeld S.K."/>
            <person name="Kurochkin I.V."/>
            <person name="Lareau L.F."/>
            <person name="Lazarevic D."/>
            <person name="Lipovich L."/>
            <person name="Liu J."/>
            <person name="Liuni S."/>
            <person name="McWilliam S."/>
            <person name="Madan Babu M."/>
            <person name="Madera M."/>
            <person name="Marchionni L."/>
            <person name="Matsuda H."/>
            <person name="Matsuzawa S."/>
            <person name="Miki H."/>
            <person name="Mignone F."/>
            <person name="Miyake S."/>
            <person name="Morris K."/>
            <person name="Mottagui-Tabar S."/>
            <person name="Mulder N."/>
            <person name="Nakano N."/>
            <person name="Nakauchi H."/>
            <person name="Ng P."/>
            <person name="Nilsson R."/>
            <person name="Nishiguchi S."/>
            <person name="Nishikawa S."/>
            <person name="Nori F."/>
            <person name="Ohara O."/>
            <person name="Okazaki Y."/>
            <person name="Orlando V."/>
            <person name="Pang K.C."/>
            <person name="Pavan W.J."/>
            <person name="Pavesi G."/>
            <person name="Pesole G."/>
            <person name="Petrovsky N."/>
            <person name="Piazza S."/>
            <person name="Reed J."/>
            <person name="Reid J.F."/>
            <person name="Ring B.Z."/>
            <person name="Ringwald M."/>
            <person name="Rost B."/>
            <person name="Ruan Y."/>
            <person name="Salzberg S.L."/>
            <person name="Sandelin A."/>
            <person name="Schneider C."/>
            <person name="Schoenbach C."/>
            <person name="Sekiguchi K."/>
            <person name="Semple C.A."/>
            <person name="Seno S."/>
            <person name="Sessa L."/>
            <person name="Sheng Y."/>
            <person name="Shibata Y."/>
            <person name="Shimada H."/>
            <person name="Shimada K."/>
            <person name="Silva D."/>
            <person name="Sinclair B."/>
            <person name="Sperling S."/>
            <person name="Stupka E."/>
            <person name="Sugiura K."/>
            <person name="Sultana R."/>
            <person name="Takenaka Y."/>
            <person name="Taki K."/>
            <person name="Tammoja K."/>
            <person name="Tan S.L."/>
            <person name="Tang S."/>
            <person name="Taylor M.S."/>
            <person name="Tegner J."/>
            <person name="Teichmann S.A."/>
            <person name="Ueda H.R."/>
            <person name="van Nimwegen E."/>
            <person name="Verardo R."/>
            <person name="Wei C.L."/>
            <person name="Yagi K."/>
            <person name="Yamanishi H."/>
            <person name="Zabarovsky E."/>
            <person name="Zhu S."/>
            <person name="Zimmer A."/>
            <person name="Hide W."/>
            <person name="Bult C."/>
            <person name="Grimmond S.M."/>
            <person name="Teasdale R.D."/>
            <person name="Liu E.T."/>
            <person name="Brusic V."/>
            <person name="Quackenbush J."/>
            <person name="Wahlestedt C."/>
            <person name="Mattick J.S."/>
            <person name="Hume D.A."/>
            <person name="Kai C."/>
            <person name="Sasaki D."/>
            <person name="Tomaru Y."/>
            <person name="Fukuda S."/>
            <person name="Kanamori-Katayama M."/>
            <person name="Suzuki M."/>
            <person name="Aoki J."/>
            <person name="Arakawa T."/>
            <person name="Iida J."/>
            <person name="Imamura K."/>
            <person name="Itoh M."/>
            <person name="Kato T."/>
            <person name="Kawaji H."/>
            <person name="Kawagashira N."/>
            <person name="Kawashima T."/>
            <person name="Kojima M."/>
            <person name="Kondo S."/>
            <person name="Konno H."/>
            <person name="Nakano K."/>
            <person name="Ninomiya N."/>
            <person name="Nishio T."/>
            <person name="Okada M."/>
            <person name="Plessy C."/>
            <person name="Shibata K."/>
            <person name="Shiraki T."/>
            <person name="Suzuki S."/>
            <person name="Tagami M."/>
            <person name="Waki K."/>
            <person name="Watahiki A."/>
            <person name="Okamura-Oho Y."/>
            <person name="Suzuki H."/>
            <person name="Kawai J."/>
            <person name="Hayashizaki Y."/>
        </authorList>
    </citation>
    <scope>NUCLEOTIDE SEQUENCE [LARGE SCALE MRNA]</scope>
    <source>
        <strain>C57BL/6J</strain>
        <tissue>Embryo</tissue>
    </source>
</reference>
<reference key="6">
    <citation type="journal article" date="2004" name="Genome Res.">
        <title>The status, quality, and expansion of the NIH full-length cDNA project: the Mammalian Gene Collection (MGC).</title>
        <authorList>
            <consortium name="The MGC Project Team"/>
        </authorList>
    </citation>
    <scope>NUCLEOTIDE SEQUENCE [LARGE SCALE MRNA]</scope>
    <source>
        <tissue>Mammary gland</tissue>
    </source>
</reference>
<reference key="7">
    <citation type="journal article" date="2010" name="Cell">
        <title>A tissue-specific atlas of mouse protein phosphorylation and expression.</title>
        <authorList>
            <person name="Huttlin E.L."/>
            <person name="Jedrychowski M.P."/>
            <person name="Elias J.E."/>
            <person name="Goswami T."/>
            <person name="Rad R."/>
            <person name="Beausoleil S.A."/>
            <person name="Villen J."/>
            <person name="Haas W."/>
            <person name="Sowa M.E."/>
            <person name="Gygi S.P."/>
        </authorList>
    </citation>
    <scope>IDENTIFICATION BY MASS SPECTROMETRY [LARGE SCALE ANALYSIS]</scope>
    <source>
        <tissue>Brain</tissue>
        <tissue>Brown adipose tissue</tissue>
        <tissue>Heart</tissue>
        <tissue>Kidney</tissue>
        <tissue>Liver</tissue>
        <tissue>Lung</tissue>
        <tissue>Pancreas</tissue>
        <tissue>Spleen</tissue>
        <tissue>Testis</tissue>
    </source>
</reference>
<sequence length="239" mass="27057">MAKPCGVRLSGEARKQVDVFRQNLFQEADDFLCTFLPRKIISLSQLLQEDSLNVADLSSLRAPLDIPIPDPPPKDDEMETDKQEKKEVPKCGYLPGNEKLLALLALVKPEVWTLKEKCILVITWIQHLIPKIEDGNDFGVAIQEKVLERVNAVKTKVEAFQTTISKYFSERGDAVAKASKDTHVMDYRALVHERDEAAYGALRAMVLDLRAFYAELYHIISSNLEKIVNPKGEEKPSMY</sequence>
<feature type="initiator methionine" description="Removed" evidence="1">
    <location>
        <position position="1"/>
    </location>
</feature>
<feature type="chain" id="PRO_0000161786" description="Proteasome activator complex subunit 2">
    <location>
        <begin position="2"/>
        <end position="239"/>
    </location>
</feature>
<feature type="region of interest" description="Disordered" evidence="2">
    <location>
        <begin position="65"/>
        <end position="87"/>
    </location>
</feature>
<feature type="compositionally biased region" description="Basic and acidic residues" evidence="2">
    <location>
        <begin position="72"/>
        <end position="87"/>
    </location>
</feature>
<feature type="modified residue" description="N-acetylalanine" evidence="1">
    <location>
        <position position="2"/>
    </location>
</feature>
<feature type="modified residue" description="Phosphoserine" evidence="1">
    <location>
        <position position="10"/>
    </location>
</feature>
<feature type="sequence conflict" description="In Ref. 2; AAC53296." evidence="3" ref="2">
    <original>A</original>
    <variation>P</variation>
    <location>
        <position position="152"/>
    </location>
</feature>
<feature type="helix" evidence="4">
    <location>
        <begin position="11"/>
        <end position="33"/>
    </location>
</feature>
<feature type="helix" evidence="4">
    <location>
        <begin position="35"/>
        <end position="47"/>
    </location>
</feature>
<feature type="turn" evidence="4">
    <location>
        <begin position="50"/>
        <end position="52"/>
    </location>
</feature>
<feature type="helix" evidence="4">
    <location>
        <begin position="57"/>
        <end position="60"/>
    </location>
</feature>
<feature type="helix" evidence="4">
    <location>
        <begin position="98"/>
        <end position="128"/>
    </location>
</feature>
<feature type="helix" evidence="4">
    <location>
        <begin position="138"/>
        <end position="180"/>
    </location>
</feature>
<feature type="strand" evidence="4">
    <location>
        <begin position="181"/>
        <end position="184"/>
    </location>
</feature>
<feature type="helix" evidence="4">
    <location>
        <begin position="186"/>
        <end position="222"/>
    </location>
</feature>
<feature type="helix" evidence="4">
    <location>
        <begin position="224"/>
        <end position="228"/>
    </location>
</feature>
<keyword id="KW-0002">3D-structure</keyword>
<keyword id="KW-0007">Acetylation</keyword>
<keyword id="KW-0597">Phosphoprotein</keyword>
<keyword id="KW-0647">Proteasome</keyword>
<keyword id="KW-1185">Reference proteome</keyword>
<comment type="function">
    <text>Implicated in immunoproteasome assembly and required for efficient antigen processing. The PA28 activator complex enhances the generation of class I binding peptides by altering the cleavage pattern of the proteasome.</text>
</comment>
<comment type="subunit">
    <text>Heterodimer of PSME1 and PSME2, which forms a hexameric ring.</text>
</comment>
<comment type="induction">
    <text>By interferon gamma.</text>
</comment>
<comment type="similarity">
    <text evidence="3">Belongs to the PA28 family.</text>
</comment>
<organism>
    <name type="scientific">Mus musculus</name>
    <name type="common">Mouse</name>
    <dbReference type="NCBI Taxonomy" id="10090"/>
    <lineage>
        <taxon>Eukaryota</taxon>
        <taxon>Metazoa</taxon>
        <taxon>Chordata</taxon>
        <taxon>Craniata</taxon>
        <taxon>Vertebrata</taxon>
        <taxon>Euteleostomi</taxon>
        <taxon>Mammalia</taxon>
        <taxon>Eutheria</taxon>
        <taxon>Euarchontoglires</taxon>
        <taxon>Glires</taxon>
        <taxon>Rodentia</taxon>
        <taxon>Myomorpha</taxon>
        <taxon>Muroidea</taxon>
        <taxon>Muridae</taxon>
        <taxon>Murinae</taxon>
        <taxon>Mus</taxon>
        <taxon>Mus</taxon>
    </lineage>
</organism>
<dbReference type="EMBL" id="U60329">
    <property type="protein sequence ID" value="AAC53296.1"/>
    <property type="molecule type" value="mRNA"/>
</dbReference>
<dbReference type="EMBL" id="AB007138">
    <property type="protein sequence ID" value="BAA28837.1"/>
    <property type="molecule type" value="Genomic_DNA"/>
</dbReference>
<dbReference type="EMBL" id="AF060195">
    <property type="protein sequence ID" value="AAC83999.1"/>
    <property type="molecule type" value="Genomic_DNA"/>
</dbReference>
<dbReference type="EMBL" id="AB053120">
    <property type="protein sequence ID" value="BAB47405.1"/>
    <property type="molecule type" value="Genomic_DNA"/>
</dbReference>
<dbReference type="EMBL" id="AK012344">
    <property type="protein sequence ID" value="BAB28175.1"/>
    <property type="molecule type" value="mRNA"/>
</dbReference>
<dbReference type="EMBL" id="BC005680">
    <property type="protein sequence ID" value="AAH05680.1"/>
    <property type="molecule type" value="mRNA"/>
</dbReference>
<dbReference type="EMBL" id="BC057859">
    <property type="protein sequence ID" value="AAH57859.1"/>
    <property type="molecule type" value="mRNA"/>
</dbReference>
<dbReference type="CCDS" id="CCDS49494.1"/>
<dbReference type="RefSeq" id="NP_001025026.1">
    <property type="nucleotide sequence ID" value="NM_001029855.1"/>
</dbReference>
<dbReference type="RefSeq" id="NP_035320.1">
    <property type="nucleotide sequence ID" value="NM_011190.3"/>
</dbReference>
<dbReference type="PDB" id="5MSK">
    <property type="method" value="X-ray"/>
    <property type="resolution" value="3.60 A"/>
    <property type="chains" value="A/B/C/D/E/F/G=1-239"/>
</dbReference>
<dbReference type="PDB" id="5MX5">
    <property type="method" value="X-ray"/>
    <property type="resolution" value="2.90 A"/>
    <property type="chains" value="B/D/F/I/K/M=1-239"/>
</dbReference>
<dbReference type="PDBsum" id="5MSK"/>
<dbReference type="PDBsum" id="5MX5"/>
<dbReference type="SMR" id="P97372"/>
<dbReference type="BioGRID" id="202433">
    <property type="interactions" value="39"/>
</dbReference>
<dbReference type="BioGRID" id="548745">
    <property type="interactions" value="1"/>
</dbReference>
<dbReference type="FunCoup" id="P97372">
    <property type="interactions" value="1287"/>
</dbReference>
<dbReference type="IntAct" id="P97372">
    <property type="interactions" value="3"/>
</dbReference>
<dbReference type="STRING" id="10090.ENSMUSP00000100564"/>
<dbReference type="GlyGen" id="P97372">
    <property type="glycosylation" value="1 site, 1 O-linked glycan (1 site)"/>
</dbReference>
<dbReference type="iPTMnet" id="P97372"/>
<dbReference type="PhosphoSitePlus" id="P97372"/>
<dbReference type="SwissPalm" id="P97372"/>
<dbReference type="CPTAC" id="non-CPTAC-3942"/>
<dbReference type="jPOST" id="P97372"/>
<dbReference type="PaxDb" id="10090-ENSMUSP00000100564"/>
<dbReference type="PeptideAtlas" id="P97372"/>
<dbReference type="ProteomicsDB" id="301991"/>
<dbReference type="Pumba" id="P97372"/>
<dbReference type="DNASU" id="19188"/>
<dbReference type="Ensembl" id="ENSMUST00000104958.2">
    <property type="protein sequence ID" value="ENSMUSP00000100564.2"/>
    <property type="gene ID" value="ENSMUSG00000078153.4"/>
</dbReference>
<dbReference type="Ensembl" id="ENSMUST00000161807.8">
    <property type="protein sequence ID" value="ENSMUSP00000123798.2"/>
    <property type="gene ID" value="ENSMUSG00000079197.11"/>
</dbReference>
<dbReference type="GeneID" id="19188"/>
<dbReference type="KEGG" id="mmu:19188"/>
<dbReference type="KEGG" id="mmu:621823"/>
<dbReference type="UCSC" id="uc007tzg.1">
    <property type="organism name" value="mouse"/>
</dbReference>
<dbReference type="AGR" id="MGI:1096365"/>
<dbReference type="CTD" id="5721"/>
<dbReference type="CTD" id="621823"/>
<dbReference type="MGI" id="MGI:1096365">
    <property type="gene designation" value="Psme2"/>
</dbReference>
<dbReference type="VEuPathDB" id="HostDB:ENSMUSG00000078153"/>
<dbReference type="VEuPathDB" id="HostDB:ENSMUSG00000079197"/>
<dbReference type="eggNOG" id="KOG4470">
    <property type="taxonomic scope" value="Eukaryota"/>
</dbReference>
<dbReference type="GeneTree" id="ENSGT00950000183098"/>
<dbReference type="HOGENOM" id="CLU_062515_0_1_1"/>
<dbReference type="InParanoid" id="P97372"/>
<dbReference type="OMA" id="KKPPKCG"/>
<dbReference type="OrthoDB" id="6591885at2759"/>
<dbReference type="PhylomeDB" id="P97372"/>
<dbReference type="TreeFam" id="TF106236"/>
<dbReference type="Reactome" id="R-MMU-9907900">
    <property type="pathway name" value="Proteasome assembly"/>
</dbReference>
<dbReference type="BioGRID-ORCS" id="19188">
    <property type="hits" value="5 hits in 80 CRISPR screens"/>
</dbReference>
<dbReference type="BioGRID-ORCS" id="621823">
    <property type="hits" value="1 hit in 56 CRISPR screens"/>
</dbReference>
<dbReference type="ChiTaRS" id="Psme2">
    <property type="organism name" value="mouse"/>
</dbReference>
<dbReference type="PRO" id="PR:P97372"/>
<dbReference type="Proteomes" id="UP000000589">
    <property type="component" value="Chromosome 11"/>
</dbReference>
<dbReference type="Proteomes" id="UP000000589">
    <property type="component" value="Chromosome 14"/>
</dbReference>
<dbReference type="RNAct" id="P97372">
    <property type="molecule type" value="protein"/>
</dbReference>
<dbReference type="Bgee" id="ENSMUSG00000078153">
    <property type="expression patterns" value="Expressed in spleen and 55 other cell types or tissues"/>
</dbReference>
<dbReference type="ExpressionAtlas" id="P97372">
    <property type="expression patterns" value="baseline and differential"/>
</dbReference>
<dbReference type="GO" id="GO:0008537">
    <property type="term" value="C:proteasome activator complex"/>
    <property type="evidence" value="ECO:0007669"/>
    <property type="project" value="InterPro"/>
</dbReference>
<dbReference type="GO" id="GO:0019884">
    <property type="term" value="P:antigen processing and presentation of exogenous antigen"/>
    <property type="evidence" value="ECO:0000315"/>
    <property type="project" value="MGI"/>
</dbReference>
<dbReference type="FunFam" id="1.20.120.180:FF:000002">
    <property type="entry name" value="Proteasome activator complex subunit 1"/>
    <property type="match status" value="1"/>
</dbReference>
<dbReference type="FunFam" id="1.20.5.120:FF:000002">
    <property type="entry name" value="proteasome activator complex subunit 2"/>
    <property type="match status" value="1"/>
</dbReference>
<dbReference type="Gene3D" id="1.20.120.180">
    <property type="entry name" value="Proteasome activator pa28, C-terminal domain"/>
    <property type="match status" value="1"/>
</dbReference>
<dbReference type="Gene3D" id="1.20.5.120">
    <property type="entry name" value="Proteasome activator pa28, N-terminal domain"/>
    <property type="match status" value="1"/>
</dbReference>
<dbReference type="InterPro" id="IPR003186">
    <property type="entry name" value="PA28_C"/>
</dbReference>
<dbReference type="InterPro" id="IPR036997">
    <property type="entry name" value="PA28_C_sf"/>
</dbReference>
<dbReference type="InterPro" id="IPR036996">
    <property type="entry name" value="PA28_N_sf"/>
</dbReference>
<dbReference type="InterPro" id="IPR009077">
    <property type="entry name" value="Proteasome_activ_PA28"/>
</dbReference>
<dbReference type="InterPro" id="IPR003185">
    <property type="entry name" value="Proteasome_activ_PA28_N"/>
</dbReference>
<dbReference type="InterPro" id="IPR036252">
    <property type="entry name" value="Proteasome_activ_sf"/>
</dbReference>
<dbReference type="PANTHER" id="PTHR10660:SF6">
    <property type="entry name" value="PROTEASOME ACTIVATOR COMPLEX SUBUNIT 2"/>
    <property type="match status" value="1"/>
</dbReference>
<dbReference type="PANTHER" id="PTHR10660">
    <property type="entry name" value="PROTEASOME REGULATOR PA28"/>
    <property type="match status" value="1"/>
</dbReference>
<dbReference type="Pfam" id="PF02252">
    <property type="entry name" value="PA28_C"/>
    <property type="match status" value="1"/>
</dbReference>
<dbReference type="Pfam" id="PF02251">
    <property type="entry name" value="PA28_N"/>
    <property type="match status" value="1"/>
</dbReference>
<dbReference type="SUPFAM" id="SSF47216">
    <property type="entry name" value="Proteasome activator"/>
    <property type="match status" value="1"/>
</dbReference>
<name>PSME2_MOUSE</name>
<accession>P97372</accession>
<accession>O35562</accession>
<evidence type="ECO:0000250" key="1">
    <source>
        <dbReference type="UniProtKB" id="Q9UL46"/>
    </source>
</evidence>
<evidence type="ECO:0000256" key="2">
    <source>
        <dbReference type="SAM" id="MobiDB-lite"/>
    </source>
</evidence>
<evidence type="ECO:0000305" key="3"/>
<evidence type="ECO:0007829" key="4">
    <source>
        <dbReference type="PDB" id="5MX5"/>
    </source>
</evidence>
<proteinExistence type="evidence at protein level"/>